<dbReference type="EC" id="3.1.2.6" evidence="1"/>
<dbReference type="EMBL" id="CP000264">
    <property type="protein sequence ID" value="ABD53959.1"/>
    <property type="molecule type" value="Genomic_DNA"/>
</dbReference>
<dbReference type="RefSeq" id="WP_011454166.1">
    <property type="nucleotide sequence ID" value="NC_007802.1"/>
</dbReference>
<dbReference type="SMR" id="Q28TK3"/>
<dbReference type="STRING" id="290400.Jann_1042"/>
<dbReference type="KEGG" id="jan:Jann_1042"/>
<dbReference type="eggNOG" id="COG0491">
    <property type="taxonomic scope" value="Bacteria"/>
</dbReference>
<dbReference type="HOGENOM" id="CLU_030571_4_1_5"/>
<dbReference type="OrthoDB" id="9802248at2"/>
<dbReference type="UniPathway" id="UPA00619">
    <property type="reaction ID" value="UER00676"/>
</dbReference>
<dbReference type="Proteomes" id="UP000008326">
    <property type="component" value="Chromosome"/>
</dbReference>
<dbReference type="GO" id="GO:0004416">
    <property type="term" value="F:hydroxyacylglutathione hydrolase activity"/>
    <property type="evidence" value="ECO:0007669"/>
    <property type="project" value="UniProtKB-UniRule"/>
</dbReference>
<dbReference type="GO" id="GO:0046872">
    <property type="term" value="F:metal ion binding"/>
    <property type="evidence" value="ECO:0007669"/>
    <property type="project" value="UniProtKB-KW"/>
</dbReference>
<dbReference type="GO" id="GO:0019243">
    <property type="term" value="P:methylglyoxal catabolic process to D-lactate via S-lactoyl-glutathione"/>
    <property type="evidence" value="ECO:0007669"/>
    <property type="project" value="InterPro"/>
</dbReference>
<dbReference type="CDD" id="cd07723">
    <property type="entry name" value="hydroxyacylglutathione_hydrolase_MBL-fold"/>
    <property type="match status" value="1"/>
</dbReference>
<dbReference type="Gene3D" id="3.60.15.10">
    <property type="entry name" value="Ribonuclease Z/Hydroxyacylglutathione hydrolase-like"/>
    <property type="match status" value="1"/>
</dbReference>
<dbReference type="HAMAP" id="MF_01374">
    <property type="entry name" value="Glyoxalase_2"/>
    <property type="match status" value="1"/>
</dbReference>
<dbReference type="InterPro" id="IPR035680">
    <property type="entry name" value="Clx_II_MBL"/>
</dbReference>
<dbReference type="InterPro" id="IPR050110">
    <property type="entry name" value="Glyoxalase_II_hydrolase"/>
</dbReference>
<dbReference type="InterPro" id="IPR032282">
    <property type="entry name" value="HAGH_C"/>
</dbReference>
<dbReference type="InterPro" id="IPR017782">
    <property type="entry name" value="Hydroxyacylglutathione_Hdrlase"/>
</dbReference>
<dbReference type="InterPro" id="IPR001279">
    <property type="entry name" value="Metallo-B-lactamas"/>
</dbReference>
<dbReference type="InterPro" id="IPR036866">
    <property type="entry name" value="RibonucZ/Hydroxyglut_hydro"/>
</dbReference>
<dbReference type="NCBIfam" id="TIGR03413">
    <property type="entry name" value="GSH_gloB"/>
    <property type="match status" value="1"/>
</dbReference>
<dbReference type="PANTHER" id="PTHR43705">
    <property type="entry name" value="HYDROXYACYLGLUTATHIONE HYDROLASE"/>
    <property type="match status" value="1"/>
</dbReference>
<dbReference type="PANTHER" id="PTHR43705:SF1">
    <property type="entry name" value="HYDROXYACYLGLUTATHIONE HYDROLASE GLOB"/>
    <property type="match status" value="1"/>
</dbReference>
<dbReference type="Pfam" id="PF16123">
    <property type="entry name" value="HAGH_C"/>
    <property type="match status" value="1"/>
</dbReference>
<dbReference type="Pfam" id="PF00753">
    <property type="entry name" value="Lactamase_B"/>
    <property type="match status" value="1"/>
</dbReference>
<dbReference type="PIRSF" id="PIRSF005457">
    <property type="entry name" value="Glx"/>
    <property type="match status" value="1"/>
</dbReference>
<dbReference type="SMART" id="SM00849">
    <property type="entry name" value="Lactamase_B"/>
    <property type="match status" value="1"/>
</dbReference>
<dbReference type="SUPFAM" id="SSF56281">
    <property type="entry name" value="Metallo-hydrolase/oxidoreductase"/>
    <property type="match status" value="1"/>
</dbReference>
<name>GLO2_JANSC</name>
<evidence type="ECO:0000255" key="1">
    <source>
        <dbReference type="HAMAP-Rule" id="MF_01374"/>
    </source>
</evidence>
<comment type="function">
    <text evidence="1">Thiolesterase that catalyzes the hydrolysis of S-D-lactoyl-glutathione to form glutathione and D-lactic acid.</text>
</comment>
<comment type="catalytic activity">
    <reaction evidence="1">
        <text>an S-(2-hydroxyacyl)glutathione + H2O = a 2-hydroxy carboxylate + glutathione + H(+)</text>
        <dbReference type="Rhea" id="RHEA:21864"/>
        <dbReference type="ChEBI" id="CHEBI:15377"/>
        <dbReference type="ChEBI" id="CHEBI:15378"/>
        <dbReference type="ChEBI" id="CHEBI:57925"/>
        <dbReference type="ChEBI" id="CHEBI:58896"/>
        <dbReference type="ChEBI" id="CHEBI:71261"/>
        <dbReference type="EC" id="3.1.2.6"/>
    </reaction>
</comment>
<comment type="cofactor">
    <cofactor evidence="1">
        <name>Zn(2+)</name>
        <dbReference type="ChEBI" id="CHEBI:29105"/>
    </cofactor>
    <text evidence="1">Binds 2 Zn(2+) ions per subunit.</text>
</comment>
<comment type="pathway">
    <text evidence="1">Secondary metabolite metabolism; methylglyoxal degradation; (R)-lactate from methylglyoxal: step 2/2.</text>
</comment>
<comment type="subunit">
    <text evidence="1">Monomer.</text>
</comment>
<comment type="similarity">
    <text evidence="1">Belongs to the metallo-beta-lactamase superfamily. Glyoxalase II family.</text>
</comment>
<organism>
    <name type="scientific">Jannaschia sp. (strain CCS1)</name>
    <dbReference type="NCBI Taxonomy" id="290400"/>
    <lineage>
        <taxon>Bacteria</taxon>
        <taxon>Pseudomonadati</taxon>
        <taxon>Pseudomonadota</taxon>
        <taxon>Alphaproteobacteria</taxon>
        <taxon>Rhodobacterales</taxon>
        <taxon>Roseobacteraceae</taxon>
        <taxon>Jannaschia</taxon>
    </lineage>
</organism>
<gene>
    <name evidence="1" type="primary">gloB</name>
    <name type="ordered locus">Jann_1042</name>
</gene>
<protein>
    <recommendedName>
        <fullName evidence="1">Hydroxyacylglutathione hydrolase</fullName>
        <ecNumber evidence="1">3.1.2.6</ecNumber>
    </recommendedName>
    <alternativeName>
        <fullName evidence="1">Glyoxalase II</fullName>
        <shortName evidence="1">Glx II</shortName>
    </alternativeName>
</protein>
<feature type="chain" id="PRO_0000309652" description="Hydroxyacylglutathione hydrolase">
    <location>
        <begin position="1"/>
        <end position="256"/>
    </location>
</feature>
<feature type="binding site" evidence="1">
    <location>
        <position position="57"/>
    </location>
    <ligand>
        <name>Zn(2+)</name>
        <dbReference type="ChEBI" id="CHEBI:29105"/>
        <label>1</label>
    </ligand>
</feature>
<feature type="binding site" evidence="1">
    <location>
        <position position="59"/>
    </location>
    <ligand>
        <name>Zn(2+)</name>
        <dbReference type="ChEBI" id="CHEBI:29105"/>
        <label>1</label>
    </ligand>
</feature>
<feature type="binding site" evidence="1">
    <location>
        <position position="61"/>
    </location>
    <ligand>
        <name>Zn(2+)</name>
        <dbReference type="ChEBI" id="CHEBI:29105"/>
        <label>2</label>
    </ligand>
</feature>
<feature type="binding site" evidence="1">
    <location>
        <position position="62"/>
    </location>
    <ligand>
        <name>Zn(2+)</name>
        <dbReference type="ChEBI" id="CHEBI:29105"/>
        <label>2</label>
    </ligand>
</feature>
<feature type="binding site" evidence="1">
    <location>
        <position position="115"/>
    </location>
    <ligand>
        <name>Zn(2+)</name>
        <dbReference type="ChEBI" id="CHEBI:29105"/>
        <label>1</label>
    </ligand>
</feature>
<feature type="binding site" evidence="1">
    <location>
        <position position="134"/>
    </location>
    <ligand>
        <name>Zn(2+)</name>
        <dbReference type="ChEBI" id="CHEBI:29105"/>
        <label>1</label>
    </ligand>
</feature>
<feature type="binding site" evidence="1">
    <location>
        <position position="134"/>
    </location>
    <ligand>
        <name>Zn(2+)</name>
        <dbReference type="ChEBI" id="CHEBI:29105"/>
        <label>2</label>
    </ligand>
</feature>
<feature type="binding site" evidence="1">
    <location>
        <position position="172"/>
    </location>
    <ligand>
        <name>Zn(2+)</name>
        <dbReference type="ChEBI" id="CHEBI:29105"/>
        <label>2</label>
    </ligand>
</feature>
<accession>Q28TK3</accession>
<keyword id="KW-0378">Hydrolase</keyword>
<keyword id="KW-0479">Metal-binding</keyword>
<keyword id="KW-1185">Reference proteome</keyword>
<keyword id="KW-0862">Zinc</keyword>
<sequence length="256" mass="27033">MADPQIITIPCLQDNYAFLLHDPSTGATACIDVPDAAPIQAALGAQGWTLTDILLTHHHWDHIDGVPALVEATGAKVWGAAADAHRLPPLDHALAEGDTIRIGALEGDVMDVSGHTVGHVAFHFPAATAVFTADSLMALGCGRLFEGTPAQMHGSLEKLKMLPPGTLVCSGHEYTASNARFALTIEPDNPDLIFRVERITAARAAGQPTVPSTLAEELATNPFLRADAPTVAAPLDMEGADPVDVFTRIRAQKDSF</sequence>
<reference key="1">
    <citation type="submission" date="2006-02" db="EMBL/GenBank/DDBJ databases">
        <title>Complete sequence of chromosome of Jannaschia sp. CCS1.</title>
        <authorList>
            <consortium name="US DOE Joint Genome Institute"/>
            <person name="Copeland A."/>
            <person name="Lucas S."/>
            <person name="Lapidus A."/>
            <person name="Barry K."/>
            <person name="Detter J.C."/>
            <person name="Glavina del Rio T."/>
            <person name="Hammon N."/>
            <person name="Israni S."/>
            <person name="Pitluck S."/>
            <person name="Brettin T."/>
            <person name="Bruce D."/>
            <person name="Han C."/>
            <person name="Tapia R."/>
            <person name="Gilna P."/>
            <person name="Chertkov O."/>
            <person name="Saunders E."/>
            <person name="Schmutz J."/>
            <person name="Larimer F."/>
            <person name="Land M."/>
            <person name="Kyrpides N."/>
            <person name="Lykidis A."/>
            <person name="Moran M.A."/>
            <person name="Belas R."/>
            <person name="Ye W."/>
            <person name="Buchan A."/>
            <person name="Gonzalez J.M."/>
            <person name="Schell M.A."/>
            <person name="Richardson P."/>
        </authorList>
    </citation>
    <scope>NUCLEOTIDE SEQUENCE [LARGE SCALE GENOMIC DNA]</scope>
    <source>
        <strain>CCS1</strain>
    </source>
</reference>
<proteinExistence type="inferred from homology"/>